<organism>
    <name type="scientific">Arabidopsis thaliana</name>
    <name type="common">Mouse-ear cress</name>
    <dbReference type="NCBI Taxonomy" id="3702"/>
    <lineage>
        <taxon>Eukaryota</taxon>
        <taxon>Viridiplantae</taxon>
        <taxon>Streptophyta</taxon>
        <taxon>Embryophyta</taxon>
        <taxon>Tracheophyta</taxon>
        <taxon>Spermatophyta</taxon>
        <taxon>Magnoliopsida</taxon>
        <taxon>eudicotyledons</taxon>
        <taxon>Gunneridae</taxon>
        <taxon>Pentapetalae</taxon>
        <taxon>rosids</taxon>
        <taxon>malvids</taxon>
        <taxon>Brassicales</taxon>
        <taxon>Brassicaceae</taxon>
        <taxon>Camelineae</taxon>
        <taxon>Arabidopsis</taxon>
    </lineage>
</organism>
<feature type="chain" id="PRO_0000066670" description="DNA N(6)-methyladenine demethylase ALKBH1A">
    <location>
        <begin position="1"/>
        <end position="345"/>
    </location>
</feature>
<feature type="domain" description="Fe2OG dioxygenase" evidence="3">
    <location>
        <begin position="225"/>
        <end position="345"/>
    </location>
</feature>
<feature type="binding site" evidence="1">
    <location>
        <position position="179"/>
    </location>
    <ligand>
        <name>substrate</name>
    </ligand>
</feature>
<feature type="binding site" evidence="1">
    <location>
        <begin position="186"/>
        <end position="188"/>
    </location>
    <ligand>
        <name>substrate</name>
    </ligand>
</feature>
<feature type="binding site" evidence="2">
    <location>
        <begin position="232"/>
        <end position="234"/>
    </location>
    <ligand>
        <name>2-oxoglutarate</name>
        <dbReference type="ChEBI" id="CHEBI:16810"/>
    </ligand>
</feature>
<feature type="binding site" evidence="3">
    <location>
        <position position="243"/>
    </location>
    <ligand>
        <name>Fe cation</name>
        <dbReference type="ChEBI" id="CHEBI:24875"/>
        <note>catalytic</note>
    </ligand>
</feature>
<feature type="binding site" evidence="3">
    <location>
        <position position="245"/>
    </location>
    <ligand>
        <name>Fe cation</name>
        <dbReference type="ChEBI" id="CHEBI:24875"/>
        <note>catalytic</note>
    </ligand>
</feature>
<feature type="binding site" evidence="3">
    <location>
        <position position="299"/>
    </location>
    <ligand>
        <name>Fe cation</name>
        <dbReference type="ChEBI" id="CHEBI:24875"/>
        <note>catalytic</note>
    </ligand>
</feature>
<feature type="binding site" evidence="2">
    <location>
        <begin position="336"/>
        <end position="342"/>
    </location>
    <ligand>
        <name>2-oxoglutarate</name>
        <dbReference type="ChEBI" id="CHEBI:16810"/>
    </ligand>
</feature>
<sequence length="345" mass="39020">MYESANVSDDADRTAFRRAEKKYKLYYEQDSKFSRKKKLPKPIDLSELLDFNLISQNFNNDGVLPDGIRVSKVDSSPVFCIDNRPGFYFIPDALSLKEQCKWIKESLTSFPQPPNRTNHNAIYGPIDDLFDSAKENKVLVQDDLTNNKWKFYEEVDIEKATRSSCKSVSASVLLRKLRWSTLGLQFDWSKRNYDVSLPHNNIPDALCQLAKTHAAIAMPDGEEFRPEGAIVNYFGIGDTLGGHLDDMEADWSKPIVSMSLGCKAIFLLGGKSKDDPPHAMYLRSGDVVLMAGEARECFHGIPRIFTGEENADIGALESELSHESGHFFAEYIKTSRININIRQVF</sequence>
<reference key="1">
    <citation type="journal article" date="2000" name="Nature">
        <title>Sequence and analysis of chromosome 1 of the plant Arabidopsis thaliana.</title>
        <authorList>
            <person name="Theologis A."/>
            <person name="Ecker J.R."/>
            <person name="Palm C.J."/>
            <person name="Federspiel N.A."/>
            <person name="Kaul S."/>
            <person name="White O."/>
            <person name="Alonso J."/>
            <person name="Altafi H."/>
            <person name="Araujo R."/>
            <person name="Bowman C.L."/>
            <person name="Brooks S.Y."/>
            <person name="Buehler E."/>
            <person name="Chan A."/>
            <person name="Chao Q."/>
            <person name="Chen H."/>
            <person name="Cheuk R.F."/>
            <person name="Chin C.W."/>
            <person name="Chung M.K."/>
            <person name="Conn L."/>
            <person name="Conway A.B."/>
            <person name="Conway A.R."/>
            <person name="Creasy T.H."/>
            <person name="Dewar K."/>
            <person name="Dunn P."/>
            <person name="Etgu P."/>
            <person name="Feldblyum T.V."/>
            <person name="Feng J.-D."/>
            <person name="Fong B."/>
            <person name="Fujii C.Y."/>
            <person name="Gill J.E."/>
            <person name="Goldsmith A.D."/>
            <person name="Haas B."/>
            <person name="Hansen N.F."/>
            <person name="Hughes B."/>
            <person name="Huizar L."/>
            <person name="Hunter J.L."/>
            <person name="Jenkins J."/>
            <person name="Johnson-Hopson C."/>
            <person name="Khan S."/>
            <person name="Khaykin E."/>
            <person name="Kim C.J."/>
            <person name="Koo H.L."/>
            <person name="Kremenetskaia I."/>
            <person name="Kurtz D.B."/>
            <person name="Kwan A."/>
            <person name="Lam B."/>
            <person name="Langin-Hooper S."/>
            <person name="Lee A."/>
            <person name="Lee J.M."/>
            <person name="Lenz C.A."/>
            <person name="Li J.H."/>
            <person name="Li Y.-P."/>
            <person name="Lin X."/>
            <person name="Liu S.X."/>
            <person name="Liu Z.A."/>
            <person name="Luros J.S."/>
            <person name="Maiti R."/>
            <person name="Marziali A."/>
            <person name="Militscher J."/>
            <person name="Miranda M."/>
            <person name="Nguyen M."/>
            <person name="Nierman W.C."/>
            <person name="Osborne B.I."/>
            <person name="Pai G."/>
            <person name="Peterson J."/>
            <person name="Pham P.K."/>
            <person name="Rizzo M."/>
            <person name="Rooney T."/>
            <person name="Rowley D."/>
            <person name="Sakano H."/>
            <person name="Salzberg S.L."/>
            <person name="Schwartz J.R."/>
            <person name="Shinn P."/>
            <person name="Southwick A.M."/>
            <person name="Sun H."/>
            <person name="Tallon L.J."/>
            <person name="Tambunga G."/>
            <person name="Toriumi M.J."/>
            <person name="Town C.D."/>
            <person name="Utterback T."/>
            <person name="Van Aken S."/>
            <person name="Vaysberg M."/>
            <person name="Vysotskaia V.S."/>
            <person name="Walker M."/>
            <person name="Wu D."/>
            <person name="Yu G."/>
            <person name="Fraser C.M."/>
            <person name="Venter J.C."/>
            <person name="Davis R.W."/>
        </authorList>
    </citation>
    <scope>NUCLEOTIDE SEQUENCE [LARGE SCALE GENOMIC DNA]</scope>
    <source>
        <strain>cv. Columbia</strain>
    </source>
</reference>
<reference key="2">
    <citation type="journal article" date="2017" name="Plant J.">
        <title>Araport11: a complete reannotation of the Arabidopsis thaliana reference genome.</title>
        <authorList>
            <person name="Cheng C.Y."/>
            <person name="Krishnakumar V."/>
            <person name="Chan A.P."/>
            <person name="Thibaud-Nissen F."/>
            <person name="Schobel S."/>
            <person name="Town C.D."/>
        </authorList>
    </citation>
    <scope>GENOME REANNOTATION</scope>
    <source>
        <strain>cv. Columbia</strain>
    </source>
</reference>
<reference key="3">
    <citation type="submission" date="2007-01" db="EMBL/GenBank/DDBJ databases">
        <title>Arabidopsis ORF clones.</title>
        <authorList>
            <person name="Kim C.J."/>
            <person name="Bautista V.R."/>
            <person name="Chen H."/>
            <person name="De Los Reyes C."/>
            <person name="Wu S.Y."/>
            <person name="Ecker J.R."/>
        </authorList>
    </citation>
    <scope>NUCLEOTIDE SEQUENCE [LARGE SCALE MRNA]</scope>
    <source>
        <strain>cv. Columbia</strain>
    </source>
</reference>
<reference key="4">
    <citation type="journal article" date="2024" name="Plant Sci.">
        <title>Identification of AtALKBH1A and AtALKBH1D as DNA N6-adenine demethylases in Arabidopsis thaliana.</title>
        <authorList>
            <person name="Li D."/>
            <person name="Du J."/>
            <person name="Gao M."/>
            <person name="He C."/>
        </authorList>
    </citation>
    <scope>FUNCTION</scope>
    <scope>DISRUPTION PHENOTYPE</scope>
    <scope>CATALYTIC ACTIVITY</scope>
    <scope>TISSUE SPECIFICITY</scope>
    <scope>SUBCELLULAR LOCATION</scope>
    <scope>GENE FAMILY</scope>
    <scope>NOMENCLATURE</scope>
    <source>
        <strain>cv. Columbia</strain>
    </source>
</reference>
<proteinExistence type="evidence at protein level"/>
<gene>
    <name evidence="5" type="primary">ALKBH1A</name>
    <name evidence="8" type="ordered locus">At1g11780</name>
    <name evidence="9" type="ORF">F25C20.6</name>
</gene>
<protein>
    <recommendedName>
        <fullName evidence="5">DNA N(6)-methyladenine demethylase ALKBH1A</fullName>
        <shortName evidence="5">DNA 6 mA demethylase ALKBH1A</shortName>
        <ecNumber evidence="4">1.14.11.51</ecNumber>
    </recommendedName>
    <alternativeName>
        <fullName evidence="5">Alkylated DNA repair protein alkB homolog 1A</fullName>
        <shortName evidence="5">AtALKBH1A</shortName>
        <shortName evidence="7">Protein alkB homolog 1A</shortName>
    </alternativeName>
    <alternativeName>
        <fullName evidence="5">Alpha-ketoglutarate-dependent dioxygenase ALKBH1A</fullName>
    </alternativeName>
</protein>
<dbReference type="EC" id="1.14.11.51" evidence="4"/>
<dbReference type="EMBL" id="AC007296">
    <property type="protein sequence ID" value="AAD30244.1"/>
    <property type="status" value="ALT_SEQ"/>
    <property type="molecule type" value="Genomic_DNA"/>
</dbReference>
<dbReference type="EMBL" id="CP002684">
    <property type="protein sequence ID" value="AEE28784.1"/>
    <property type="molecule type" value="Genomic_DNA"/>
</dbReference>
<dbReference type="EMBL" id="BT030097">
    <property type="protein sequence ID" value="ABN04835.1"/>
    <property type="molecule type" value="mRNA"/>
</dbReference>
<dbReference type="PIR" id="G86251">
    <property type="entry name" value="G86251"/>
</dbReference>
<dbReference type="RefSeq" id="NP_172643.1">
    <property type="nucleotide sequence ID" value="NM_101050.4"/>
</dbReference>
<dbReference type="SMR" id="Q9SA98"/>
<dbReference type="FunCoup" id="Q9SA98">
    <property type="interactions" value="4003"/>
</dbReference>
<dbReference type="STRING" id="3702.Q9SA98"/>
<dbReference type="PaxDb" id="3702-AT1G11780.1"/>
<dbReference type="ProteomicsDB" id="245024"/>
<dbReference type="DNASU" id="837723"/>
<dbReference type="EnsemblPlants" id="AT1G11780.1">
    <property type="protein sequence ID" value="AT1G11780.1"/>
    <property type="gene ID" value="AT1G11780"/>
</dbReference>
<dbReference type="GeneID" id="837723"/>
<dbReference type="Gramene" id="AT1G11780.1">
    <property type="protein sequence ID" value="AT1G11780.1"/>
    <property type="gene ID" value="AT1G11780"/>
</dbReference>
<dbReference type="KEGG" id="ath:AT1G11780"/>
<dbReference type="Araport" id="AT1G11780"/>
<dbReference type="TAIR" id="AT1G11780"/>
<dbReference type="eggNOG" id="KOG2731">
    <property type="taxonomic scope" value="Eukaryota"/>
</dbReference>
<dbReference type="HOGENOM" id="CLU_029471_2_0_1"/>
<dbReference type="InParanoid" id="Q9SA98"/>
<dbReference type="OMA" id="YKRRDPP"/>
<dbReference type="OrthoDB" id="6614653at2759"/>
<dbReference type="PhylomeDB" id="Q9SA98"/>
<dbReference type="PRO" id="PR:Q9SA98"/>
<dbReference type="Proteomes" id="UP000006548">
    <property type="component" value="Chromosome 1"/>
</dbReference>
<dbReference type="ExpressionAtlas" id="Q9SA98">
    <property type="expression patterns" value="baseline and differential"/>
</dbReference>
<dbReference type="GO" id="GO:0005737">
    <property type="term" value="C:cytoplasm"/>
    <property type="evidence" value="ECO:0000314"/>
    <property type="project" value="UniProtKB"/>
</dbReference>
<dbReference type="GO" id="GO:0005634">
    <property type="term" value="C:nucleus"/>
    <property type="evidence" value="ECO:0000314"/>
    <property type="project" value="UniProtKB"/>
</dbReference>
<dbReference type="GO" id="GO:0141131">
    <property type="term" value="F:DNA N6-methyladenine demethylase activity"/>
    <property type="evidence" value="ECO:0000314"/>
    <property type="project" value="UniProtKB"/>
</dbReference>
<dbReference type="GO" id="GO:0046872">
    <property type="term" value="F:metal ion binding"/>
    <property type="evidence" value="ECO:0007669"/>
    <property type="project" value="UniProtKB-KW"/>
</dbReference>
<dbReference type="GO" id="GO:0006281">
    <property type="term" value="P:DNA repair"/>
    <property type="evidence" value="ECO:0007669"/>
    <property type="project" value="UniProtKB-KW"/>
</dbReference>
<dbReference type="GO" id="GO:0010029">
    <property type="term" value="P:regulation of seed germination"/>
    <property type="evidence" value="ECO:0000315"/>
    <property type="project" value="UniProtKB"/>
</dbReference>
<dbReference type="FunFam" id="2.60.120.590:FF:000020">
    <property type="entry name" value="Alpha-ketoglutarate-dependent dioxygenase alkB"/>
    <property type="match status" value="1"/>
</dbReference>
<dbReference type="Gene3D" id="2.60.120.590">
    <property type="entry name" value="Alpha-ketoglutarate-dependent dioxygenase AlkB-like"/>
    <property type="match status" value="1"/>
</dbReference>
<dbReference type="InterPro" id="IPR004574">
    <property type="entry name" value="Alkb"/>
</dbReference>
<dbReference type="InterPro" id="IPR027450">
    <property type="entry name" value="AlkB-like"/>
</dbReference>
<dbReference type="InterPro" id="IPR037151">
    <property type="entry name" value="AlkB-like_sf"/>
</dbReference>
<dbReference type="InterPro" id="IPR005123">
    <property type="entry name" value="Oxoglu/Fe-dep_dioxygenase_dom"/>
</dbReference>
<dbReference type="PANTHER" id="PTHR16557">
    <property type="entry name" value="ALKYLATED DNA REPAIR PROTEIN ALKB-RELATED"/>
    <property type="match status" value="1"/>
</dbReference>
<dbReference type="PANTHER" id="PTHR16557:SF11">
    <property type="entry name" value="ALPHA-KETOGLUTARATE-DEPENDENT DIOXYGENASE ALKB"/>
    <property type="match status" value="1"/>
</dbReference>
<dbReference type="Pfam" id="PF13532">
    <property type="entry name" value="2OG-FeII_Oxy_2"/>
    <property type="match status" value="1"/>
</dbReference>
<dbReference type="SUPFAM" id="SSF51197">
    <property type="entry name" value="Clavaminate synthase-like"/>
    <property type="match status" value="1"/>
</dbReference>
<dbReference type="PROSITE" id="PS51471">
    <property type="entry name" value="FE2OG_OXY"/>
    <property type="match status" value="1"/>
</dbReference>
<evidence type="ECO:0000250" key="1"/>
<evidence type="ECO:0000250" key="2">
    <source>
        <dbReference type="UniProtKB" id="P05050"/>
    </source>
</evidence>
<evidence type="ECO:0000255" key="3">
    <source>
        <dbReference type="PROSITE-ProRule" id="PRU00805"/>
    </source>
</evidence>
<evidence type="ECO:0000269" key="4">
    <source>
    </source>
</evidence>
<evidence type="ECO:0000303" key="5">
    <source>
    </source>
</evidence>
<evidence type="ECO:0000305" key="6"/>
<evidence type="ECO:0000305" key="7">
    <source>
    </source>
</evidence>
<evidence type="ECO:0000312" key="8">
    <source>
        <dbReference type="Araport" id="AT1G11780"/>
    </source>
</evidence>
<evidence type="ECO:0000312" key="9">
    <source>
        <dbReference type="EMBL" id="AAD30244.1"/>
    </source>
</evidence>
<keyword id="KW-0963">Cytoplasm</keyword>
<keyword id="KW-0223">Dioxygenase</keyword>
<keyword id="KW-0227">DNA damage</keyword>
<keyword id="KW-0234">DNA repair</keyword>
<keyword id="KW-0408">Iron</keyword>
<keyword id="KW-0479">Metal-binding</keyword>
<keyword id="KW-0539">Nucleus</keyword>
<keyword id="KW-0560">Oxidoreductase</keyword>
<keyword id="KW-1185">Reference proteome</keyword>
<comment type="function">
    <text evidence="4">Dioxygenase that catalyzes DNA N(6)-methyladenine (6 mA) demethylation to modulate gene expression and regulate seed germination (PubMed:38432357).</text>
</comment>
<comment type="catalytic activity">
    <reaction evidence="4">
        <text>an N(6)-methyl-2'-deoxyadenosine in DNA + 2-oxoglutarate + O2 = a 2'-deoxyadenosine in DNA + formaldehyde + succinate + CO2</text>
        <dbReference type="Rhea" id="RHEA:49524"/>
        <dbReference type="Rhea" id="RHEA-COMP:12418"/>
        <dbReference type="Rhea" id="RHEA-COMP:12419"/>
        <dbReference type="ChEBI" id="CHEBI:15379"/>
        <dbReference type="ChEBI" id="CHEBI:16526"/>
        <dbReference type="ChEBI" id="CHEBI:16810"/>
        <dbReference type="ChEBI" id="CHEBI:16842"/>
        <dbReference type="ChEBI" id="CHEBI:30031"/>
        <dbReference type="ChEBI" id="CHEBI:90615"/>
        <dbReference type="ChEBI" id="CHEBI:90616"/>
        <dbReference type="EC" id="1.14.11.51"/>
    </reaction>
    <physiologicalReaction direction="left-to-right" evidence="4">
        <dbReference type="Rhea" id="RHEA:49525"/>
    </physiologicalReaction>
</comment>
<comment type="cofactor">
    <cofactor evidence="3">
        <name>Fe(2+)</name>
        <dbReference type="ChEBI" id="CHEBI:29033"/>
    </cofactor>
    <text evidence="3">Binds 1 Fe(2+) ion per subunit.</text>
</comment>
<comment type="subcellular location">
    <subcellularLocation>
        <location evidence="4">Nucleus</location>
    </subcellularLocation>
    <subcellularLocation>
        <location evidence="4">Cytoplasm</location>
    </subcellularLocation>
</comment>
<comment type="tissue specificity">
    <text evidence="4">Mostly expressed in siliques, to a lower extent in roots, seedlings and rosette leaves, but barely in cauline leaves, stems and flowers.</text>
</comment>
<comment type="disruption phenotype">
    <text evidence="4">Elevated DNA N(6)-methyladenine (6 mA) methylation levels (PubMed:38432357). Plants lacking ALKBH1A and ALKBH1D show delayed seed germination associated with dysregulation of seed germination key regulators (e.g. FUS3, TPC1 and SPHK1) due to a high 6 mA DNA methylation state (PubMed:38432357).</text>
</comment>
<comment type="similarity">
    <text evidence="6">Belongs to the alkB family.</text>
</comment>
<comment type="sequence caution" evidence="6">
    <conflict type="erroneous gene model prediction">
        <sequence resource="EMBL-CDS" id="AAD30244"/>
    </conflict>
</comment>
<name>AKB1A_ARATH</name>
<accession>Q9SA98</accession>
<accession>A2RVV6</accession>